<name>NASF_BACSU</name>
<evidence type="ECO:0000269" key="1">
    <source>
    </source>
</evidence>
<evidence type="ECO:0000269" key="2">
    <source>
    </source>
</evidence>
<evidence type="ECO:0000305" key="3"/>
<keyword id="KW-0489">Methyltransferase</keyword>
<keyword id="KW-0627">Porphyrin biosynthesis</keyword>
<keyword id="KW-1185">Reference proteome</keyword>
<keyword id="KW-0949">S-adenosyl-L-methionine</keyword>
<keyword id="KW-0808">Transferase</keyword>
<organism>
    <name type="scientific">Bacillus subtilis (strain 168)</name>
    <dbReference type="NCBI Taxonomy" id="224308"/>
    <lineage>
        <taxon>Bacteria</taxon>
        <taxon>Bacillati</taxon>
        <taxon>Bacillota</taxon>
        <taxon>Bacilli</taxon>
        <taxon>Bacillales</taxon>
        <taxon>Bacillaceae</taxon>
        <taxon>Bacillus</taxon>
    </lineage>
</organism>
<accession>P42437</accession>
<comment type="catalytic activity">
    <reaction>
        <text>uroporphyrinogen III + 2 S-adenosyl-L-methionine = precorrin-2 + 2 S-adenosyl-L-homocysteine + H(+)</text>
        <dbReference type="Rhea" id="RHEA:32459"/>
        <dbReference type="ChEBI" id="CHEBI:15378"/>
        <dbReference type="ChEBI" id="CHEBI:57308"/>
        <dbReference type="ChEBI" id="CHEBI:57856"/>
        <dbReference type="ChEBI" id="CHEBI:58827"/>
        <dbReference type="ChEBI" id="CHEBI:59789"/>
        <dbReference type="EC" id="2.1.1.107"/>
    </reaction>
</comment>
<comment type="induction">
    <text evidence="1 2">Positively regulated by TnrA under nitrogen-limited conditions.</text>
</comment>
<comment type="similarity">
    <text evidence="3">Belongs to the precorrin methyltransferase family.</text>
</comment>
<gene>
    <name type="primary">nasF</name>
    <name type="synonym">nasBE</name>
    <name type="ordered locus">BSU03280</name>
</gene>
<sequence>MIMKNGIVYFVGAGPGDPGLLTIKGKQALKEADVILYDRLANPKLLEFASPDCQFIYCGKLPNRHFMKQKEINALLVEKALNGLTVVRLKGGDPSVFGRVGEEADALHEHGIRYEMVPGITSGIAAPLYAGIPVTHRDFASSFAMITAHDKSLKGTPNLDWEGLARSVQTLVFYMGVKNLSYICQQLISYGKSPSVPVIVIQWGTWGRQRSVKGTLENIQQKVQEHQITNPAIIVIGDIVNFQTHSWFESKPLIGRHLMVVTHGEDEDPLADKLRDSGADLIEWPKWRTENMPVNEEILRKIGTFEDVFFTSRRAVCEFFRALASQKIDIRQLTAKLSAASEQAKTELEKRGFLVTAIQPDSEKRLVVGSRHAVENMQKHESCSFYITHENVIDDRFTHMIQRTISESPLHMVICPNKLSVQQLINGGEQIGILPEPSASRPPIVCIGDDSAAGIYGFTAVQEQDELLAFIHNQHAEKKLLHT</sequence>
<reference key="1">
    <citation type="journal article" date="1995" name="J. Bacteriol.">
        <title>The nasB operon and nasA gene are required for nitrate/nitrite assimilation in Bacillus subtilis.</title>
        <authorList>
            <person name="Ogawa K."/>
            <person name="Akagawa E."/>
            <person name="Yamane K."/>
            <person name="Sun Z.-W."/>
            <person name="Lacelle M."/>
            <person name="Zuber P."/>
            <person name="Nakano M.M."/>
        </authorList>
    </citation>
    <scope>NUCLEOTIDE SEQUENCE [GENOMIC DNA]</scope>
    <source>
        <strain>168</strain>
    </source>
</reference>
<reference key="2">
    <citation type="journal article" date="1996" name="Microbiology">
        <title>The 25 degrees-36 degrees region of the Bacillus subtilis chromosome: determination of the sequence of a 146 kb segment and identification of 113 genes.</title>
        <authorList>
            <person name="Yamane K."/>
            <person name="Kumano M."/>
            <person name="Kurita K."/>
        </authorList>
    </citation>
    <scope>NUCLEOTIDE SEQUENCE [GENOMIC DNA]</scope>
    <source>
        <strain>168</strain>
    </source>
</reference>
<reference key="3">
    <citation type="journal article" date="1997" name="Nature">
        <title>The complete genome sequence of the Gram-positive bacterium Bacillus subtilis.</title>
        <authorList>
            <person name="Kunst F."/>
            <person name="Ogasawara N."/>
            <person name="Moszer I."/>
            <person name="Albertini A.M."/>
            <person name="Alloni G."/>
            <person name="Azevedo V."/>
            <person name="Bertero M.G."/>
            <person name="Bessieres P."/>
            <person name="Bolotin A."/>
            <person name="Borchert S."/>
            <person name="Borriss R."/>
            <person name="Boursier L."/>
            <person name="Brans A."/>
            <person name="Braun M."/>
            <person name="Brignell S.C."/>
            <person name="Bron S."/>
            <person name="Brouillet S."/>
            <person name="Bruschi C.V."/>
            <person name="Caldwell B."/>
            <person name="Capuano V."/>
            <person name="Carter N.M."/>
            <person name="Choi S.-K."/>
            <person name="Codani J.-J."/>
            <person name="Connerton I.F."/>
            <person name="Cummings N.J."/>
            <person name="Daniel R.A."/>
            <person name="Denizot F."/>
            <person name="Devine K.M."/>
            <person name="Duesterhoeft A."/>
            <person name="Ehrlich S.D."/>
            <person name="Emmerson P.T."/>
            <person name="Entian K.-D."/>
            <person name="Errington J."/>
            <person name="Fabret C."/>
            <person name="Ferrari E."/>
            <person name="Foulger D."/>
            <person name="Fritz C."/>
            <person name="Fujita M."/>
            <person name="Fujita Y."/>
            <person name="Fuma S."/>
            <person name="Galizzi A."/>
            <person name="Galleron N."/>
            <person name="Ghim S.-Y."/>
            <person name="Glaser P."/>
            <person name="Goffeau A."/>
            <person name="Golightly E.J."/>
            <person name="Grandi G."/>
            <person name="Guiseppi G."/>
            <person name="Guy B.J."/>
            <person name="Haga K."/>
            <person name="Haiech J."/>
            <person name="Harwood C.R."/>
            <person name="Henaut A."/>
            <person name="Hilbert H."/>
            <person name="Holsappel S."/>
            <person name="Hosono S."/>
            <person name="Hullo M.-F."/>
            <person name="Itaya M."/>
            <person name="Jones L.-M."/>
            <person name="Joris B."/>
            <person name="Karamata D."/>
            <person name="Kasahara Y."/>
            <person name="Klaerr-Blanchard M."/>
            <person name="Klein C."/>
            <person name="Kobayashi Y."/>
            <person name="Koetter P."/>
            <person name="Koningstein G."/>
            <person name="Krogh S."/>
            <person name="Kumano M."/>
            <person name="Kurita K."/>
            <person name="Lapidus A."/>
            <person name="Lardinois S."/>
            <person name="Lauber J."/>
            <person name="Lazarevic V."/>
            <person name="Lee S.-M."/>
            <person name="Levine A."/>
            <person name="Liu H."/>
            <person name="Masuda S."/>
            <person name="Mauel C."/>
            <person name="Medigue C."/>
            <person name="Medina N."/>
            <person name="Mellado R.P."/>
            <person name="Mizuno M."/>
            <person name="Moestl D."/>
            <person name="Nakai S."/>
            <person name="Noback M."/>
            <person name="Noone D."/>
            <person name="O'Reilly M."/>
            <person name="Ogawa K."/>
            <person name="Ogiwara A."/>
            <person name="Oudega B."/>
            <person name="Park S.-H."/>
            <person name="Parro V."/>
            <person name="Pohl T.M."/>
            <person name="Portetelle D."/>
            <person name="Porwollik S."/>
            <person name="Prescott A.M."/>
            <person name="Presecan E."/>
            <person name="Pujic P."/>
            <person name="Purnelle B."/>
            <person name="Rapoport G."/>
            <person name="Rey M."/>
            <person name="Reynolds S."/>
            <person name="Rieger M."/>
            <person name="Rivolta C."/>
            <person name="Rocha E."/>
            <person name="Roche B."/>
            <person name="Rose M."/>
            <person name="Sadaie Y."/>
            <person name="Sato T."/>
            <person name="Scanlan E."/>
            <person name="Schleich S."/>
            <person name="Schroeter R."/>
            <person name="Scoffone F."/>
            <person name="Sekiguchi J."/>
            <person name="Sekowska A."/>
            <person name="Seror S.J."/>
            <person name="Serror P."/>
            <person name="Shin B.-S."/>
            <person name="Soldo B."/>
            <person name="Sorokin A."/>
            <person name="Tacconi E."/>
            <person name="Takagi T."/>
            <person name="Takahashi H."/>
            <person name="Takemaru K."/>
            <person name="Takeuchi M."/>
            <person name="Tamakoshi A."/>
            <person name="Tanaka T."/>
            <person name="Terpstra P."/>
            <person name="Tognoni A."/>
            <person name="Tosato V."/>
            <person name="Uchiyama S."/>
            <person name="Vandenbol M."/>
            <person name="Vannier F."/>
            <person name="Vassarotti A."/>
            <person name="Viari A."/>
            <person name="Wambutt R."/>
            <person name="Wedler E."/>
            <person name="Wedler H."/>
            <person name="Weitzenegger T."/>
            <person name="Winters P."/>
            <person name="Wipat A."/>
            <person name="Yamamoto H."/>
            <person name="Yamane K."/>
            <person name="Yasumoto K."/>
            <person name="Yata K."/>
            <person name="Yoshida K."/>
            <person name="Yoshikawa H.-F."/>
            <person name="Zumstein E."/>
            <person name="Yoshikawa H."/>
            <person name="Danchin A."/>
        </authorList>
    </citation>
    <scope>NUCLEOTIDE SEQUENCE [LARGE SCALE GENOMIC DNA]</scope>
    <source>
        <strain>168</strain>
    </source>
</reference>
<reference key="4">
    <citation type="journal article" date="2000" name="J. Mol. Biol.">
        <title>Purification and in vitro activities of the Bacillus subtilis TnrA transcription factor.</title>
        <authorList>
            <person name="Wray L.V. Jr."/>
            <person name="Zalieckas J.M."/>
            <person name="Fisher S.H."/>
        </authorList>
    </citation>
    <scope>INDUCTION BY TNRA</scope>
    <source>
        <strain>168</strain>
    </source>
</reference>
<reference key="5">
    <citation type="journal article" date="2003" name="Mol. Microbiol.">
        <title>Identification of additional TnrA-regulated genes of Bacillus subtilis associated with a TnrA box.</title>
        <authorList>
            <person name="Yoshida K."/>
            <person name="Yamaguchi H."/>
            <person name="Kinehara M."/>
            <person name="Ohki Y.-H."/>
            <person name="Nakaura Y."/>
            <person name="Fujita Y."/>
        </authorList>
    </citation>
    <scope>INDUCTION BY TNRA</scope>
</reference>
<feature type="chain" id="PRO_0000150384" description="Uroporphyrinogen-III C-methyltransferase">
    <location>
        <begin position="1"/>
        <end position="483"/>
    </location>
</feature>
<proteinExistence type="evidence at transcript level"/>
<protein>
    <recommendedName>
        <fullName>Uroporphyrinogen-III C-methyltransferase</fullName>
        <shortName>Urogen III methylase</shortName>
        <ecNumber>2.1.1.107</ecNumber>
    </recommendedName>
    <alternativeName>
        <fullName>SUMT</fullName>
    </alternativeName>
    <alternativeName>
        <fullName>Uroporphyrinogen III methylase</fullName>
        <shortName>UROM</shortName>
    </alternativeName>
</protein>
<dbReference type="EC" id="2.1.1.107"/>
<dbReference type="EMBL" id="D30689">
    <property type="protein sequence ID" value="BAA06356.1"/>
    <property type="molecule type" value="Genomic_DNA"/>
</dbReference>
<dbReference type="EMBL" id="D50453">
    <property type="protein sequence ID" value="BAA08962.1"/>
    <property type="molecule type" value="Genomic_DNA"/>
</dbReference>
<dbReference type="EMBL" id="AL009126">
    <property type="protein sequence ID" value="CAB12122.1"/>
    <property type="molecule type" value="Genomic_DNA"/>
</dbReference>
<dbReference type="PIR" id="I40031">
    <property type="entry name" value="I40031"/>
</dbReference>
<dbReference type="RefSeq" id="NP_388210.1">
    <property type="nucleotide sequence ID" value="NC_000964.3"/>
</dbReference>
<dbReference type="SMR" id="P42437"/>
<dbReference type="FunCoup" id="P42437">
    <property type="interactions" value="552"/>
</dbReference>
<dbReference type="STRING" id="224308.BSU03280"/>
<dbReference type="PaxDb" id="224308-BSU03280"/>
<dbReference type="EnsemblBacteria" id="CAB12122">
    <property type="protein sequence ID" value="CAB12122"/>
    <property type="gene ID" value="BSU_03280"/>
</dbReference>
<dbReference type="GeneID" id="938324"/>
<dbReference type="KEGG" id="bsu:BSU03280"/>
<dbReference type="PATRIC" id="fig|224308.43.peg.336"/>
<dbReference type="eggNOG" id="COG0007">
    <property type="taxonomic scope" value="Bacteria"/>
</dbReference>
<dbReference type="eggNOG" id="COG1587">
    <property type="taxonomic scope" value="Bacteria"/>
</dbReference>
<dbReference type="InParanoid" id="P42437"/>
<dbReference type="OrthoDB" id="9815856at2"/>
<dbReference type="PhylomeDB" id="P42437"/>
<dbReference type="BioCyc" id="BSUB:BSU03280-MONOMER"/>
<dbReference type="Proteomes" id="UP000001570">
    <property type="component" value="Chromosome"/>
</dbReference>
<dbReference type="GO" id="GO:0004851">
    <property type="term" value="F:uroporphyrin-III C-methyltransferase activity"/>
    <property type="evidence" value="ECO:0000318"/>
    <property type="project" value="GO_Central"/>
</dbReference>
<dbReference type="GO" id="GO:0004852">
    <property type="term" value="F:uroporphyrinogen-III synthase activity"/>
    <property type="evidence" value="ECO:0007669"/>
    <property type="project" value="InterPro"/>
</dbReference>
<dbReference type="GO" id="GO:0032259">
    <property type="term" value="P:methylation"/>
    <property type="evidence" value="ECO:0007669"/>
    <property type="project" value="UniProtKB-KW"/>
</dbReference>
<dbReference type="GO" id="GO:0019354">
    <property type="term" value="P:siroheme biosynthetic process"/>
    <property type="evidence" value="ECO:0000318"/>
    <property type="project" value="GO_Central"/>
</dbReference>
<dbReference type="CDD" id="cd11642">
    <property type="entry name" value="SUMT"/>
    <property type="match status" value="1"/>
</dbReference>
<dbReference type="FunFam" id="3.30.950.10:FF:000001">
    <property type="entry name" value="Siroheme synthase"/>
    <property type="match status" value="1"/>
</dbReference>
<dbReference type="FunFam" id="3.40.1010.10:FF:000001">
    <property type="entry name" value="Siroheme synthase"/>
    <property type="match status" value="1"/>
</dbReference>
<dbReference type="Gene3D" id="3.40.50.10090">
    <property type="match status" value="1"/>
</dbReference>
<dbReference type="Gene3D" id="3.40.1010.10">
    <property type="entry name" value="Cobalt-precorrin-4 Transmethylase, Domain 1"/>
    <property type="match status" value="1"/>
</dbReference>
<dbReference type="Gene3D" id="3.30.950.10">
    <property type="entry name" value="Methyltransferase, Cobalt-precorrin-4 Transmethylase, Domain 2"/>
    <property type="match status" value="1"/>
</dbReference>
<dbReference type="InterPro" id="IPR000878">
    <property type="entry name" value="4pyrrol_Mease"/>
</dbReference>
<dbReference type="InterPro" id="IPR035996">
    <property type="entry name" value="4pyrrol_Methylase_sf"/>
</dbReference>
<dbReference type="InterPro" id="IPR036108">
    <property type="entry name" value="4pyrrol_syn_uPrphyn_synt_sf"/>
</dbReference>
<dbReference type="InterPro" id="IPR003754">
    <property type="entry name" value="4pyrrol_synth_uPrphyn_synth"/>
</dbReference>
<dbReference type="InterPro" id="IPR014777">
    <property type="entry name" value="4pyrrole_Mease_sub1"/>
</dbReference>
<dbReference type="InterPro" id="IPR014776">
    <property type="entry name" value="4pyrrole_Mease_sub2"/>
</dbReference>
<dbReference type="InterPro" id="IPR006366">
    <property type="entry name" value="CobA/CysG_C"/>
</dbReference>
<dbReference type="InterPro" id="IPR050161">
    <property type="entry name" value="Siro_Cobalamin_biosynth"/>
</dbReference>
<dbReference type="InterPro" id="IPR003043">
    <property type="entry name" value="Uropor_MeTrfase_CS"/>
</dbReference>
<dbReference type="NCBIfam" id="TIGR01469">
    <property type="entry name" value="cobA_cysG_Cterm"/>
    <property type="match status" value="1"/>
</dbReference>
<dbReference type="NCBIfam" id="NF004790">
    <property type="entry name" value="PRK06136.1"/>
    <property type="match status" value="1"/>
</dbReference>
<dbReference type="PANTHER" id="PTHR45790:SF3">
    <property type="entry name" value="S-ADENOSYL-L-METHIONINE-DEPENDENT UROPORPHYRINOGEN III METHYLTRANSFERASE, CHLOROPLASTIC"/>
    <property type="match status" value="1"/>
</dbReference>
<dbReference type="PANTHER" id="PTHR45790">
    <property type="entry name" value="SIROHEME SYNTHASE-RELATED"/>
    <property type="match status" value="1"/>
</dbReference>
<dbReference type="Pfam" id="PF02602">
    <property type="entry name" value="HEM4"/>
    <property type="match status" value="1"/>
</dbReference>
<dbReference type="Pfam" id="PF00590">
    <property type="entry name" value="TP_methylase"/>
    <property type="match status" value="1"/>
</dbReference>
<dbReference type="SUPFAM" id="SSF69618">
    <property type="entry name" value="HemD-like"/>
    <property type="match status" value="1"/>
</dbReference>
<dbReference type="SUPFAM" id="SSF53790">
    <property type="entry name" value="Tetrapyrrole methylase"/>
    <property type="match status" value="1"/>
</dbReference>
<dbReference type="PROSITE" id="PS00839">
    <property type="entry name" value="SUMT_1"/>
    <property type="match status" value="1"/>
</dbReference>
<dbReference type="PROSITE" id="PS00840">
    <property type="entry name" value="SUMT_2"/>
    <property type="match status" value="1"/>
</dbReference>